<gene>
    <name type="primary">GP</name>
</gene>
<dbReference type="EMBL" id="AF208498">
    <property type="protein sequence ID" value="AAF80981.1"/>
    <property type="molecule type" value="Genomic_RNA"/>
</dbReference>
<dbReference type="SMR" id="Q9IKB5"/>
<dbReference type="GlyCosmos" id="Q9IKB5">
    <property type="glycosylation" value="6 sites, No reported glycans"/>
</dbReference>
<dbReference type="GO" id="GO:0044167">
    <property type="term" value="C:host cell endoplasmic reticulum membrane"/>
    <property type="evidence" value="ECO:0007669"/>
    <property type="project" value="UniProtKB-SubCell"/>
</dbReference>
<dbReference type="GO" id="GO:0044178">
    <property type="term" value="C:host cell Golgi membrane"/>
    <property type="evidence" value="ECO:0007669"/>
    <property type="project" value="UniProtKB-SubCell"/>
</dbReference>
<dbReference type="GO" id="GO:0016020">
    <property type="term" value="C:membrane"/>
    <property type="evidence" value="ECO:0007669"/>
    <property type="project" value="UniProtKB-KW"/>
</dbReference>
<dbReference type="GO" id="GO:0055036">
    <property type="term" value="C:virion membrane"/>
    <property type="evidence" value="ECO:0007669"/>
    <property type="project" value="UniProtKB-SubCell"/>
</dbReference>
<dbReference type="GO" id="GO:0039654">
    <property type="term" value="P:fusion of virus membrane with host endosome membrane"/>
    <property type="evidence" value="ECO:0007669"/>
    <property type="project" value="UniProtKB-KW"/>
</dbReference>
<dbReference type="GO" id="GO:0046718">
    <property type="term" value="P:symbiont entry into host cell"/>
    <property type="evidence" value="ECO:0007669"/>
    <property type="project" value="UniProtKB-KW"/>
</dbReference>
<dbReference type="GO" id="GO:0044003">
    <property type="term" value="P:symbiont-mediated perturbation of host process"/>
    <property type="evidence" value="ECO:0007669"/>
    <property type="project" value="InterPro"/>
</dbReference>
<dbReference type="GO" id="GO:0019062">
    <property type="term" value="P:virion attachment to host cell"/>
    <property type="evidence" value="ECO:0007669"/>
    <property type="project" value="UniProtKB-KW"/>
</dbReference>
<dbReference type="InterPro" id="IPR005167">
    <property type="entry name" value="Bunya_G1"/>
</dbReference>
<dbReference type="InterPro" id="IPR014414">
    <property type="entry name" value="M_poly_TospoV"/>
</dbReference>
<dbReference type="Pfam" id="PF03557">
    <property type="entry name" value="Bunya_G1"/>
    <property type="match status" value="1"/>
</dbReference>
<dbReference type="PIRSF" id="PIRSF003960">
    <property type="entry name" value="M_poly_TospoV"/>
    <property type="match status" value="1"/>
</dbReference>
<organism>
    <name type="scientific">Tomato spotted wilt virus (strain Regular2A)</name>
    <name type="common">TSWV</name>
    <dbReference type="NCBI Taxonomy" id="267287"/>
    <lineage>
        <taxon>Viruses</taxon>
        <taxon>Riboviria</taxon>
        <taxon>Orthornavirae</taxon>
        <taxon>Negarnaviricota</taxon>
        <taxon>Polyploviricotina</taxon>
        <taxon>Ellioviricetes</taxon>
        <taxon>Bunyavirales</taxon>
        <taxon>Tospoviridae</taxon>
        <taxon>Orthotospovirus</taxon>
        <taxon>Tomato spotted wilt virus</taxon>
    </lineage>
</organism>
<protein>
    <recommendedName>
        <fullName>Envelopment polyprotein</fullName>
    </recommendedName>
    <alternativeName>
        <fullName>M polyprotein</fullName>
    </alternativeName>
    <component>
        <recommendedName>
            <fullName evidence="3">Glycoprotein N</fullName>
            <shortName>Gn</shortName>
        </recommendedName>
        <alternativeName>
            <fullName>Glycoprotein G2</fullName>
        </alternativeName>
    </component>
    <component>
        <recommendedName>
            <fullName evidence="3">Glycoprotein C</fullName>
            <shortName>Gc</shortName>
        </recommendedName>
        <alternativeName>
            <fullName>Glycoprotein G1</fullName>
        </alternativeName>
    </component>
</protein>
<comment type="function">
    <molecule>Glycoprotein N</molecule>
    <text evidence="2 3">Forms the spikes present at the surface of the virion together with Glycoprotein C. They are able to attach the virion to a cell receptor and to promote fusion of membranes after endocytosis of the virion (By similarity). Plays a role in virus binding and/or entry into the vector midgut (By similarity).</text>
</comment>
<comment type="function">
    <molecule>Glycoprotein C</molecule>
    <text evidence="2 5">Forms the spikes present at the surface of the virion together with Glycoprotein N. They are able to attach the virion to a cell receptor and to promote fusion of membranes after endocytosis of the virion (By similarity). Probable class II fusion protein (Probable).</text>
</comment>
<comment type="subunit">
    <molecule>Glycoprotein N</molecule>
    <text evidence="3">Homodimer; disulfide-linked. Heterodimer with Glycoprotein C. Interacts with nucleoprotein.</text>
</comment>
<comment type="subunit">
    <molecule>Glycoprotein C</molecule>
    <text evidence="3">Heterodimer with Glycoprotein N. Interacts with nucleoprotein.</text>
</comment>
<comment type="subcellular location">
    <molecule>Glycoprotein N</molecule>
    <subcellularLocation>
        <location evidence="3">Virion membrane</location>
        <topology evidence="3">Single-pass type I membrane protein</topology>
    </subcellularLocation>
    <subcellularLocation>
        <location evidence="3">Host Golgi apparatus membrane</location>
        <topology evidence="3">Single-pass type I membrane protein</topology>
    </subcellularLocation>
    <subcellularLocation>
        <location evidence="3">Host endoplasmic reticulum membrane</location>
        <topology evidence="3">Single-pass type I membrane protein</topology>
    </subcellularLocation>
    <text evidence="3">Glycoprotein C alone is retained in the membrane of the endoplasmic reticulum, but not transported to the Golgi. Coexpression of Glycoprotein C and Glycoprotein N results in efficient transport of Glycoprotein C to the Golgi complex, indicating that their interaction is essential for proper targeting to this organelle, where virion budding occurs.</text>
</comment>
<comment type="subcellular location">
    <molecule>Glycoprotein C</molecule>
    <subcellularLocation>
        <location evidence="3">Virion membrane</location>
        <topology evidence="3">Single-pass type I membrane protein</topology>
    </subcellularLocation>
    <subcellularLocation>
        <location evidence="3">Host Golgi apparatus membrane</location>
        <topology evidence="3">Single-pass type I membrane protein</topology>
    </subcellularLocation>
    <text evidence="3">Inserted into the ER membrane, but is not transported to the Golgi without Glycoprotein N.</text>
</comment>
<comment type="domain">
    <text evidence="3">The cell attachment site present in these glycoproteins may help in the adhesion of virus to cells.</text>
</comment>
<comment type="domain">
    <molecule>Glycoprotein N</molecule>
    <text evidence="3">The cytoplasmic C-terminus probably contains a Golgi retention signal. The transmembrane domain and C-terminus of Glycoprotein N allow Glycoprotein C to exit the ER and traffic to the Golgi.</text>
</comment>
<comment type="PTM">
    <molecule>Envelopment polyprotein</molecule>
    <text evidence="3">Specific enzymatic cleavages in vivo yield mature proteins including Glycoprotein N and Glycoprotein C.</text>
</comment>
<comment type="PTM">
    <molecule>Glycoprotein N</molecule>
    <text evidence="3">Glycosylated with O-linked glycans. Glycosylation is essential for proper subcellular location.</text>
</comment>
<comment type="PTM">
    <molecule>Glycoprotein C</molecule>
    <text evidence="3">Cleaved at acidic pH.</text>
</comment>
<comment type="miscellaneous">
    <text evidence="5">Tospoviruses are transmitted from plant to plant by thrips as the insect vector.</text>
</comment>
<comment type="similarity">
    <text evidence="5">Belongs to the tospovirus envelope glycoprotein family.</text>
</comment>
<reference key="1">
    <citation type="journal article" date="2001" name="Mol. Plant Microbe Interact.">
        <title>Overcoming host- and pathogen-mediated resistance in tomato and tobacco maps to the M RNA of Tomato spotted wilt virus.</title>
        <authorList>
            <person name="Hoffmann K."/>
            <person name="Qiu W.P."/>
            <person name="Moyer J.W."/>
        </authorList>
    </citation>
    <scope>NUCLEOTIDE SEQUENCE [GENOMIC RNA]</scope>
</reference>
<feature type="signal peptide" evidence="4">
    <location>
        <begin position="1"/>
        <end position="35"/>
    </location>
</feature>
<feature type="chain" id="PRO_0000036865" description="Envelopment polyprotein">
    <location>
        <begin position="36"/>
        <end position="1135"/>
    </location>
</feature>
<feature type="chain" id="PRO_0000036866" description="Glycoprotein N" evidence="1">
    <location>
        <begin position="36"/>
        <end position="484"/>
    </location>
</feature>
<feature type="chain" id="PRO_0000036867" description="Glycoprotein C" evidence="1">
    <location>
        <begin position="485"/>
        <end position="1135"/>
    </location>
</feature>
<feature type="topological domain" description="Lumenal" evidence="4">
    <location>
        <begin position="36"/>
        <end position="314"/>
    </location>
</feature>
<feature type="transmembrane region" description="Helical" evidence="3 4">
    <location>
        <begin position="315"/>
        <end position="366"/>
    </location>
</feature>
<feature type="topological domain" description="Cytoplasmic" evidence="4">
    <location>
        <begin position="367"/>
        <end position="484"/>
    </location>
</feature>
<feature type="topological domain" description="Lumenal" evidence="4">
    <location>
        <begin position="485"/>
        <end position="1067"/>
    </location>
</feature>
<feature type="transmembrane region" description="Helical" evidence="4">
    <location>
        <begin position="1068"/>
        <end position="1088"/>
    </location>
</feature>
<feature type="topological domain" description="Cytoplasmic" evidence="4">
    <location>
        <begin position="1089"/>
        <end position="1135"/>
    </location>
</feature>
<feature type="region of interest" description="Non-covalent dimerization" evidence="3">
    <location>
        <begin position="177"/>
        <end position="195"/>
    </location>
</feature>
<feature type="region of interest" description="Signal for signal peptide peptidase" evidence="3">
    <location>
        <begin position="437"/>
        <end position="484"/>
    </location>
</feature>
<feature type="short sequence motif" description="Cell attachment site" evidence="4">
    <location>
        <begin position="41"/>
        <end position="43"/>
    </location>
</feature>
<feature type="site" description="Cleavage; by host signal peptidase" evidence="3">
    <location>
        <begin position="484"/>
        <end position="485"/>
    </location>
</feature>
<feature type="glycosylation site" description="N-linked (GlcNAc...) asparagine; by host" evidence="3">
    <location>
        <position position="116"/>
    </location>
</feature>
<feature type="glycosylation site" description="N-linked (GlcNAc...) asparagine; by host" evidence="3">
    <location>
        <position position="210"/>
    </location>
</feature>
<feature type="glycosylation site" description="N-linked (GlcNAc...) asparagine; by host" evidence="4">
    <location>
        <position position="588"/>
    </location>
</feature>
<feature type="glycosylation site" description="N-linked (GlcNAc...) asparagine; by host" evidence="4">
    <location>
        <position position="605"/>
    </location>
</feature>
<feature type="glycosylation site" description="N-linked (GlcNAc...) asparagine; by host" evidence="4">
    <location>
        <position position="980"/>
    </location>
</feature>
<feature type="disulfide bond" evidence="3">
    <location>
        <begin position="114"/>
        <end position="145"/>
    </location>
</feature>
<feature type="disulfide bond" evidence="3">
    <location>
        <begin position="122"/>
        <end position="156"/>
    </location>
</feature>
<feature type="disulfide bond" evidence="3">
    <location>
        <begin position="224"/>
        <end position="285"/>
    </location>
</feature>
<feature type="disulfide bond" description="Interchain" evidence="3">
    <location>
        <position position="302"/>
    </location>
</feature>
<proteinExistence type="inferred from homology"/>
<keyword id="KW-1015">Disulfide bond</keyword>
<keyword id="KW-1170">Fusion of virus membrane with host endosomal membrane</keyword>
<keyword id="KW-1168">Fusion of virus membrane with host membrane</keyword>
<keyword id="KW-0325">Glycoprotein</keyword>
<keyword id="KW-1038">Host endoplasmic reticulum</keyword>
<keyword id="KW-1040">Host Golgi apparatus</keyword>
<keyword id="KW-1043">Host membrane</keyword>
<keyword id="KW-0945">Host-virus interaction</keyword>
<keyword id="KW-0472">Membrane</keyword>
<keyword id="KW-0732">Signal</keyword>
<keyword id="KW-0812">Transmembrane</keyword>
<keyword id="KW-1133">Transmembrane helix</keyword>
<keyword id="KW-1161">Viral attachment to host cell</keyword>
<keyword id="KW-1162">Viral penetration into host cytoplasm</keyword>
<keyword id="KW-0946">Virion</keyword>
<keyword id="KW-1160">Virus entry into host cell</keyword>
<name>GP_TSWVR</name>
<sequence>MRILKLLELVVKVSLFTIALSSVLLAFLIFRATDAKVEIIRGDHPEVYDDSAENEVPTAASIQRKAILETLTNLMLESQTPGTRQIREEESTIPIFAESTTQKIISVSDLPNNCLNASSLKCEIKGISTYNVYYQVENNDVIYSCVSDSAEGLEKCDNSLNLPKRFSKVPVIPITKLDNKRHFSVGTKFFISESLTQDNYPITYNSYPTNGTVSLQTVKLSGDCKITKSNFANPYTVSITSPEKIMGYLIKKPGENVEHKVISFSGSASITFTEEMLDGEHNLLCGDKSAKIPKTNKRVRDCIIKYSKSIYKQTACINFSWIRLILIALLIYFPIRWLVNKTTKPLFLWYDLIGLITYPILLLINCLWKYFPFKCSNRGNLCIITHKCTKLCICNKSKASKEHSLECPILSKETDHGYNKHKWTSMEWFHLIVNTKLSFSLLKFVTEILIGLIILSQMPMSMAQTTQCLSGCFYVPGCPFLVTSKFEKCPERDQCYCNVKEDKIIESIFGTNIIIEGPNDCIENQNCAANPSIDNLIKCRLGCEYLDLFRNKPLYNGFSDYTGSSLGLTSIGLYEAKRLRNGIIDSYNRTDKISGMIAGDSLNKNETSIPENILPRQSLIFDSVVDGKYRYMIEQSLLGGGGTIFMLNDKTSETAKKFVIYIKSVGIHYEVSEKYTTAPIQSTHTDFYSTCTGNCDTCRKNQALTGFQDFCITPTSYWGCEEAWCFAINEGATCGFCRNIYDMDKSYRIYSVLKSTIVADVCISGILGGQCSRITEEVPYENALFQADIQADLHNDGITIGELIAHGPDSHIYSGNIANLNDPVKMFGHPQLTRDGVPIFTKKTLEGDDMSWDCAAIGKKSITIKTCGYDTYRFRSGLEQISDIPVSFKDFSSFFLEKAFSLGKLKIVVDLPSDLFKVAPKKPSITSTSLNCNGCLLCGQGLSCILEFFSDLTFSTAISIDACSLSTYQLAVKKGSNKYNITMFCSANPDKKKMTLYPEGNPDISVEVLVNNVIVEEPENIIDQNDEYAHEEQQYNSDSSAWGFWDYIKSPFNFIASYFGSFFDTIRVILLIAFIFLVIYFCSILTTICKGYVKNESYKSRSKIEDDDDSEIKAPMLMKDTMTRRRPPMDFSHLV</sequence>
<evidence type="ECO:0000250" key="1"/>
<evidence type="ECO:0000250" key="2">
    <source>
        <dbReference type="UniProtKB" id="P08668"/>
    </source>
</evidence>
<evidence type="ECO:0000250" key="3">
    <source>
        <dbReference type="UniProtKB" id="P36291"/>
    </source>
</evidence>
<evidence type="ECO:0000255" key="4"/>
<evidence type="ECO:0000305" key="5"/>
<accession>Q9IKB5</accession>
<organismHost>
    <name type="scientific">Frankliniella occidentalis</name>
    <name type="common">Western flower thrips</name>
    <name type="synonym">Euthrips occidentalis</name>
    <dbReference type="NCBI Taxonomy" id="133901"/>
</organismHost>
<organismHost>
    <name type="scientific">Scirtothrips dorsalis</name>
    <name type="common">Chilli thrips</name>
    <dbReference type="NCBI Taxonomy" id="163899"/>
</organismHost>
<organismHost>
    <name type="scientific">Solanum lycopersicum</name>
    <name type="common">Tomato</name>
    <name type="synonym">Lycopersicon esculentum</name>
    <dbReference type="NCBI Taxonomy" id="4081"/>
</organismHost>
<organismHost>
    <name type="scientific">Thrips tabaci</name>
    <dbReference type="NCBI Taxonomy" id="161014"/>
</organismHost>